<gene>
    <name evidence="2 3" type="primary">mftB</name>
    <name evidence="5" type="ordered locus">MUL_0772</name>
</gene>
<dbReference type="EMBL" id="CP000325">
    <property type="protein sequence ID" value="ABL03417.1"/>
    <property type="molecule type" value="Genomic_DNA"/>
</dbReference>
<dbReference type="RefSeq" id="WP_011739042.1">
    <property type="nucleotide sequence ID" value="NC_008611.1"/>
</dbReference>
<dbReference type="SMR" id="A0PM48"/>
<dbReference type="KEGG" id="mul:MUL_0772"/>
<dbReference type="eggNOG" id="COG0535">
    <property type="taxonomic scope" value="Bacteria"/>
</dbReference>
<dbReference type="HOGENOM" id="CLU_159310_1_0_11"/>
<dbReference type="BioCyc" id="MetaCyc:MONOMER-21113"/>
<dbReference type="Proteomes" id="UP000000765">
    <property type="component" value="Chromosome"/>
</dbReference>
<dbReference type="InterPro" id="IPR023850">
    <property type="entry name" value="MftB"/>
</dbReference>
<dbReference type="NCBIfam" id="TIGR03967">
    <property type="entry name" value="mycofact_MftB"/>
    <property type="match status" value="1"/>
</dbReference>
<protein>
    <recommendedName>
        <fullName evidence="2">Peptide chaperone MftB</fullName>
    </recommendedName>
</protein>
<reference key="1">
    <citation type="journal article" date="2007" name="Genome Res.">
        <title>Reductive evolution and niche adaptation inferred from the genome of Mycobacterium ulcerans, the causative agent of Buruli ulcer.</title>
        <authorList>
            <person name="Stinear T.P."/>
            <person name="Seemann T."/>
            <person name="Pidot S."/>
            <person name="Frigui W."/>
            <person name="Reysset G."/>
            <person name="Garnier T."/>
            <person name="Meurice G."/>
            <person name="Simon D."/>
            <person name="Bouchier C."/>
            <person name="Ma L."/>
            <person name="Tichit M."/>
            <person name="Porter J.L."/>
            <person name="Ryan J."/>
            <person name="Johnson P.D.R."/>
            <person name="Davies J.K."/>
            <person name="Jenkin G.A."/>
            <person name="Small P.L.C."/>
            <person name="Jones L.M."/>
            <person name="Tekaia F."/>
            <person name="Laval F."/>
            <person name="Daffe M."/>
            <person name="Parkhill J."/>
            <person name="Cole S.T."/>
        </authorList>
    </citation>
    <scope>NUCLEOTIDE SEQUENCE [LARGE SCALE GENOMIC DNA]</scope>
    <source>
        <strain>Agy99</strain>
    </source>
</reference>
<reference key="2">
    <citation type="journal article" date="2016" name="FEBS Lett.">
        <title>Mycofactocin biosynthesis: modification of the peptide MftA by the radical S-adenosylmethionine protein MftC.</title>
        <authorList>
            <person name="Khaliullin B."/>
            <person name="Aggarwal P."/>
            <person name="Bubas M."/>
            <person name="Eaton G.R."/>
            <person name="Eaton S.S."/>
            <person name="Latham J.A."/>
        </authorList>
    </citation>
    <scope>FUNCTION</scope>
    <scope>INTERACTION WITH MFTA AND MFTC</scope>
</reference>
<reference key="3">
    <citation type="journal article" date="2017" name="J. Biol. Chem.">
        <title>Mechanistic elucidation of the mycofactocin-biosynthetic radical S-adenosylmethionine protein, MftC.</title>
        <authorList>
            <person name="Khaliullin B."/>
            <person name="Ayikpoe R."/>
            <person name="Tuttle M."/>
            <person name="Latham J.A."/>
        </authorList>
    </citation>
    <scope>FUNCTION</scope>
    <source>
        <strain>Agy99</strain>
    </source>
</reference>
<feature type="chain" id="PRO_0000452059" description="Peptide chaperone MftB">
    <location>
        <begin position="1"/>
        <end position="109"/>
    </location>
</feature>
<sequence>MRGLLTVPAPAQAAAGAGAFDPDRGWRLHAQVAVRPEPFGALLYHFGTRKLSFLKNRTILAVVRSLADHPDVRSACRAAGVDDSEHAPYLHALSVLAGSHMLVPQEADQ</sequence>
<comment type="function">
    <text evidence="1">Peptide chaperone involved in the biosynthesis of the enzyme cofactor mycofactocin (MFT). Binds MftA and MftC with high affinity, and is essential for MftC activity on MftA, likely via the formation of a ternary complex.</text>
</comment>
<comment type="subunit">
    <text evidence="1">Interacts with MftA and MftC.</text>
</comment>
<comment type="similarity">
    <text evidence="4">Belongs to the peptide chaperone MftB family.</text>
</comment>
<organism>
    <name type="scientific">Mycobacterium ulcerans (strain Agy99)</name>
    <dbReference type="NCBI Taxonomy" id="362242"/>
    <lineage>
        <taxon>Bacteria</taxon>
        <taxon>Bacillati</taxon>
        <taxon>Actinomycetota</taxon>
        <taxon>Actinomycetes</taxon>
        <taxon>Mycobacteriales</taxon>
        <taxon>Mycobacteriaceae</taxon>
        <taxon>Mycobacterium</taxon>
        <taxon>Mycobacterium ulcerans group</taxon>
    </lineage>
</organism>
<name>MFTB_MYCUA</name>
<evidence type="ECO:0000269" key="1">
    <source>
    </source>
</evidence>
<evidence type="ECO:0000303" key="2">
    <source>
    </source>
</evidence>
<evidence type="ECO:0000303" key="3">
    <source>
    </source>
</evidence>
<evidence type="ECO:0000305" key="4"/>
<evidence type="ECO:0000312" key="5">
    <source>
        <dbReference type="EMBL" id="ABL03417.1"/>
    </source>
</evidence>
<accession>A0PM48</accession>
<proteinExistence type="evidence at protein level"/>